<feature type="signal peptide" evidence="1">
    <location>
        <begin position="1"/>
        <end position="25"/>
    </location>
</feature>
<feature type="chain" id="PRO_0000015612" description="Interleukin-12 subunit alpha">
    <location>
        <begin position="26"/>
        <end position="221"/>
    </location>
</feature>
<feature type="glycosylation site" description="N-linked (GlcNAc...) asparagine" evidence="4">
    <location>
        <position position="95"/>
    </location>
</feature>
<feature type="disulfide bond" evidence="2">
    <location>
        <begin position="39"/>
        <end position="112"/>
    </location>
</feature>
<feature type="disulfide bond" evidence="1">
    <location>
        <begin position="66"/>
        <end position="198"/>
    </location>
</feature>
<feature type="disulfide bond" evidence="1">
    <location>
        <begin position="87"/>
        <end position="125"/>
    </location>
</feature>
<feature type="disulfide bond" description="Interchain (with C-200 in IL12B)" evidence="1">
    <location>
        <position position="98"/>
    </location>
</feature>
<name>IL12A_SHEEP</name>
<comment type="function">
    <text evidence="2 3">Heterodimerizes with IL12B to form the IL-12 cytokine or with EBI3/IL27B to form the IL-35 cytokine. IL-12 is primarily produced by professional antigen-presenting cells (APCs) such as B-cells and dendritic cells (DCs) as well as macrophages and granulocytes and regulates T-cell and natural killer-cell responses, induces the production of interferon-gamma (IFN-gamma), favors the differentiation of T-helper 1 (Th1) cells and is an important link between innate resistance and adaptive immunity. Mechanistically, exerts its biological effects through a receptor composed of IL12R1 and IL12R2 subunits. Binding to the receptor results in the rapid tyrosine phosphorylation of a number of cellular substrates including the JAK family kinases TYK2 and JAK2. In turn, recruited STAT4 gets phosphorylated and translocates to the nucleus where it regulates cytokine/growth factor responsive genes (By similarity). As part of IL-35, plays essential roles in maintaining the immune homeostasis of the liver microenvironment and also functions as an immune-suppressive cytokine (By similarity). Mediates biological events through unconventional receptors composed of IL12RB2 and gp130/IL6ST heterodimers or homodimers. Signaling requires the transcription factors STAT1 and STAT4, which form a unique heterodimer that binds to distinct DNA sites (By similarity).</text>
</comment>
<comment type="subunit">
    <text evidence="2 3 5">Heterodimer with IL12B; disulfide-linked. This heterodimer is known as interleukin IL-12 (PubMed:11023671). Heterodimer with EBI3/IL27B; not disulfide-linked. This heterodimer is known as interleukin IL-35. Interacts with NBR1; this interaction promotes IL-12 secretion (By similarity).</text>
</comment>
<comment type="subcellular location">
    <subcellularLocation>
        <location evidence="2">Secreted</location>
    </subcellularLocation>
</comment>
<comment type="similarity">
    <text evidence="6">Belongs to the IL-6 superfamily.</text>
</comment>
<accession>Q9TU27</accession>
<accession>Q9MYU0</accession>
<sequence length="221" mass="24859">MCPLRSLLLISTLVLLHHLPHLSLGRSLPTTTAGPGTSCLDYSQNLLRAVSNTLQKARQTLEFYSCTSEEIDHEDITKDKTSTVEACLPLELATNESCLASRETSLITNGHCLSSGKTSFMTTLCLRSIYKDLKMYHMEFQAMNAKLLMDPKRQVFLDQNMLAAIAELMQALNFDSETVPQKPSLEELDFYKTKVKLCILLHAFRIRAVTIDRMMSYLSSS</sequence>
<keyword id="KW-0202">Cytokine</keyword>
<keyword id="KW-1015">Disulfide bond</keyword>
<keyword id="KW-0325">Glycoprotein</keyword>
<keyword id="KW-0339">Growth factor</keyword>
<keyword id="KW-1185">Reference proteome</keyword>
<keyword id="KW-0964">Secreted</keyword>
<keyword id="KW-0732">Signal</keyword>
<dbReference type="EMBL" id="AF173557">
    <property type="protein sequence ID" value="AAD51976.1"/>
    <property type="molecule type" value="mRNA"/>
</dbReference>
<dbReference type="EMBL" id="AJ271035">
    <property type="protein sequence ID" value="CAB97178.1"/>
    <property type="molecule type" value="Genomic_DNA"/>
</dbReference>
<dbReference type="RefSeq" id="NP_001009736.1">
    <property type="nucleotide sequence ID" value="NM_001009736.1"/>
</dbReference>
<dbReference type="SMR" id="Q9TU27"/>
<dbReference type="STRING" id="9940.ENSOARP00000002320"/>
<dbReference type="GlyCosmos" id="Q9TU27">
    <property type="glycosylation" value="1 site, No reported glycans"/>
</dbReference>
<dbReference type="PaxDb" id="9940-ENSOARP00000002320"/>
<dbReference type="Ensembl" id="ENSOART00025006267">
    <property type="protein sequence ID" value="ENSOARP00025003023"/>
    <property type="gene ID" value="ENSOARG00025003819"/>
</dbReference>
<dbReference type="Ensembl" id="ENSOART00040002428">
    <property type="protein sequence ID" value="ENSOARP00040001137"/>
    <property type="gene ID" value="ENSOARG00040001526"/>
</dbReference>
<dbReference type="Ensembl" id="ENSOART00180004831">
    <property type="protein sequence ID" value="ENSOARP00180002337"/>
    <property type="gene ID" value="ENSOARG00180003010"/>
</dbReference>
<dbReference type="Ensembl" id="ENSOART00225051225">
    <property type="protein sequence ID" value="ENSOARP00225025562"/>
    <property type="gene ID" value="ENSOARG00225031056"/>
</dbReference>
<dbReference type="Ensembl" id="ENSOART00260000671">
    <property type="protein sequence ID" value="ENSOARP00260000382"/>
    <property type="gene ID" value="ENSOARG00260000404"/>
</dbReference>
<dbReference type="GeneID" id="443064"/>
<dbReference type="KEGG" id="oas:443064"/>
<dbReference type="CTD" id="3592"/>
<dbReference type="eggNOG" id="ENOG502S8JN">
    <property type="taxonomic scope" value="Eukaryota"/>
</dbReference>
<dbReference type="OrthoDB" id="9893660at2759"/>
<dbReference type="Proteomes" id="UP000002356">
    <property type="component" value="Unplaced"/>
</dbReference>
<dbReference type="GO" id="GO:0005615">
    <property type="term" value="C:extracellular space"/>
    <property type="evidence" value="ECO:0000314"/>
    <property type="project" value="AgBase"/>
</dbReference>
<dbReference type="GO" id="GO:0043514">
    <property type="term" value="C:interleukin-12 complex"/>
    <property type="evidence" value="ECO:0000314"/>
    <property type="project" value="AgBase"/>
</dbReference>
<dbReference type="GO" id="GO:0005125">
    <property type="term" value="F:cytokine activity"/>
    <property type="evidence" value="ECO:0007669"/>
    <property type="project" value="UniProtKB-KW"/>
</dbReference>
<dbReference type="GO" id="GO:0008083">
    <property type="term" value="F:growth factor activity"/>
    <property type="evidence" value="ECO:0007669"/>
    <property type="project" value="UniProtKB-KW"/>
</dbReference>
<dbReference type="GO" id="GO:0042163">
    <property type="term" value="F:interleukin-12 beta subunit binding"/>
    <property type="evidence" value="ECO:0000353"/>
    <property type="project" value="AgBase"/>
</dbReference>
<dbReference type="GO" id="GO:0005143">
    <property type="term" value="F:interleukin-12 receptor binding"/>
    <property type="evidence" value="ECO:0007669"/>
    <property type="project" value="InterPro"/>
</dbReference>
<dbReference type="GO" id="GO:0045513">
    <property type="term" value="F:interleukin-27 binding"/>
    <property type="evidence" value="ECO:0007669"/>
    <property type="project" value="Ensembl"/>
</dbReference>
<dbReference type="GO" id="GO:0046982">
    <property type="term" value="F:protein heterodimerization activity"/>
    <property type="evidence" value="ECO:0000353"/>
    <property type="project" value="AgBase"/>
</dbReference>
<dbReference type="GO" id="GO:0016477">
    <property type="term" value="P:cell migration"/>
    <property type="evidence" value="ECO:0007669"/>
    <property type="project" value="Ensembl"/>
</dbReference>
<dbReference type="GO" id="GO:0098586">
    <property type="term" value="P:cellular response to virus"/>
    <property type="evidence" value="ECO:0007669"/>
    <property type="project" value="Ensembl"/>
</dbReference>
<dbReference type="GO" id="GO:0050830">
    <property type="term" value="P:defense response to Gram-positive bacterium"/>
    <property type="evidence" value="ECO:0007669"/>
    <property type="project" value="Ensembl"/>
</dbReference>
<dbReference type="GO" id="GO:0097191">
    <property type="term" value="P:extrinsic apoptotic signaling pathway"/>
    <property type="evidence" value="ECO:0007669"/>
    <property type="project" value="Ensembl"/>
</dbReference>
<dbReference type="GO" id="GO:0006955">
    <property type="term" value="P:immune response"/>
    <property type="evidence" value="ECO:0007669"/>
    <property type="project" value="InterPro"/>
</dbReference>
<dbReference type="GO" id="GO:0035722">
    <property type="term" value="P:interleukin-12-mediated signaling pathway"/>
    <property type="evidence" value="ECO:0007669"/>
    <property type="project" value="Ensembl"/>
</dbReference>
<dbReference type="GO" id="GO:1903588">
    <property type="term" value="P:negative regulation of blood vessel endothelial cell proliferation involved in sprouting angiogenesis"/>
    <property type="evidence" value="ECO:0007669"/>
    <property type="project" value="Ensembl"/>
</dbReference>
<dbReference type="GO" id="GO:0032700">
    <property type="term" value="P:negative regulation of interleukin-17 production"/>
    <property type="evidence" value="ECO:0007669"/>
    <property type="project" value="Ensembl"/>
</dbReference>
<dbReference type="GO" id="GO:0050709">
    <property type="term" value="P:negative regulation of protein secretion"/>
    <property type="evidence" value="ECO:0007669"/>
    <property type="project" value="Ensembl"/>
</dbReference>
<dbReference type="GO" id="GO:0048662">
    <property type="term" value="P:negative regulation of smooth muscle cell proliferation"/>
    <property type="evidence" value="ECO:0007669"/>
    <property type="project" value="Ensembl"/>
</dbReference>
<dbReference type="GO" id="GO:1900747">
    <property type="term" value="P:negative regulation of vascular endothelial growth factor signaling pathway"/>
    <property type="evidence" value="ECO:0007669"/>
    <property type="project" value="Ensembl"/>
</dbReference>
<dbReference type="GO" id="GO:2000510">
    <property type="term" value="P:positive regulation of dendritic cell chemotaxis"/>
    <property type="evidence" value="ECO:0007669"/>
    <property type="project" value="Ensembl"/>
</dbReference>
<dbReference type="GO" id="GO:0050671">
    <property type="term" value="P:positive regulation of lymphocyte proliferation"/>
    <property type="evidence" value="ECO:0007669"/>
    <property type="project" value="Ensembl"/>
</dbReference>
<dbReference type="GO" id="GO:0032946">
    <property type="term" value="P:positive regulation of mononuclear cell proliferation"/>
    <property type="evidence" value="ECO:0000315"/>
    <property type="project" value="AgBase"/>
</dbReference>
<dbReference type="GO" id="GO:0032816">
    <property type="term" value="P:positive regulation of natural killer cell activation"/>
    <property type="evidence" value="ECO:0007669"/>
    <property type="project" value="Ensembl"/>
</dbReference>
<dbReference type="GO" id="GO:0002860">
    <property type="term" value="P:positive regulation of natural killer cell mediated cytotoxicity directed against tumor cell target"/>
    <property type="evidence" value="ECO:0007669"/>
    <property type="project" value="Ensembl"/>
</dbReference>
<dbReference type="GO" id="GO:0051135">
    <property type="term" value="P:positive regulation of NK T cell activation"/>
    <property type="evidence" value="ECO:0007669"/>
    <property type="project" value="Ensembl"/>
</dbReference>
<dbReference type="GO" id="GO:0034393">
    <property type="term" value="P:positive regulation of smooth muscle cell apoptotic process"/>
    <property type="evidence" value="ECO:0007669"/>
    <property type="project" value="Ensembl"/>
</dbReference>
<dbReference type="GO" id="GO:0001916">
    <property type="term" value="P:positive regulation of T cell mediated cytotoxicity"/>
    <property type="evidence" value="ECO:0007669"/>
    <property type="project" value="Ensembl"/>
</dbReference>
<dbReference type="GO" id="GO:0032729">
    <property type="term" value="P:positive regulation of type II interferon production"/>
    <property type="evidence" value="ECO:0007669"/>
    <property type="project" value="Ensembl"/>
</dbReference>
<dbReference type="GO" id="GO:0032496">
    <property type="term" value="P:response to lipopolysaccharide"/>
    <property type="evidence" value="ECO:0007669"/>
    <property type="project" value="Ensembl"/>
</dbReference>
<dbReference type="GO" id="GO:0010224">
    <property type="term" value="P:response to UV-B"/>
    <property type="evidence" value="ECO:0007669"/>
    <property type="project" value="Ensembl"/>
</dbReference>
<dbReference type="GO" id="GO:0032609">
    <property type="term" value="P:type II interferon production"/>
    <property type="evidence" value="ECO:0000314"/>
    <property type="project" value="AgBase"/>
</dbReference>
<dbReference type="FunFam" id="1.20.1250.10:FF:000020">
    <property type="entry name" value="Interleukin-12 subunit alpha"/>
    <property type="match status" value="1"/>
</dbReference>
<dbReference type="Gene3D" id="1.20.1250.10">
    <property type="match status" value="1"/>
</dbReference>
<dbReference type="InterPro" id="IPR009079">
    <property type="entry name" value="4_helix_cytokine-like_core"/>
</dbReference>
<dbReference type="InterPro" id="IPR050676">
    <property type="entry name" value="IL-12"/>
</dbReference>
<dbReference type="InterPro" id="IPR004281">
    <property type="entry name" value="IL-12_alpha"/>
</dbReference>
<dbReference type="PANTHER" id="PTHR48485:SF1">
    <property type="entry name" value="INTERLEUKIN-12 SUBUNIT ALPHA"/>
    <property type="match status" value="1"/>
</dbReference>
<dbReference type="PANTHER" id="PTHR48485">
    <property type="entry name" value="INTERLEUKIN-12 SUBUNIT BETA-RELATED"/>
    <property type="match status" value="1"/>
</dbReference>
<dbReference type="Pfam" id="PF03039">
    <property type="entry name" value="IL12"/>
    <property type="match status" value="1"/>
</dbReference>
<dbReference type="SUPFAM" id="SSF47266">
    <property type="entry name" value="4-helical cytokines"/>
    <property type="match status" value="1"/>
</dbReference>
<gene>
    <name type="primary">IL12A</name>
    <name type="synonym">IL12P35</name>
</gene>
<evidence type="ECO:0000250" key="1"/>
<evidence type="ECO:0000250" key="2">
    <source>
        <dbReference type="UniProtKB" id="P29459"/>
    </source>
</evidence>
<evidence type="ECO:0000250" key="3">
    <source>
        <dbReference type="UniProtKB" id="P43431"/>
    </source>
</evidence>
<evidence type="ECO:0000255" key="4"/>
<evidence type="ECO:0000269" key="5">
    <source>
    </source>
</evidence>
<evidence type="ECO:0000305" key="6"/>
<proteinExistence type="evidence at protein level"/>
<reference key="1">
    <citation type="journal article" date="2000" name="Cytokine">
        <title>Ovine interleukin 12 has biological activity on ovine and human activated peripheral blood mononuclear cells.</title>
        <authorList>
            <person name="Swinburne S.J."/>
            <person name="Russ G.R."/>
            <person name="Krishnan R."/>
        </authorList>
    </citation>
    <scope>NUCLEOTIDE SEQUENCE [MRNA]</scope>
    <scope>SUBUNIT</scope>
    <source>
        <tissue>Kidney</tissue>
    </source>
</reference>
<reference key="2">
    <citation type="journal article" date="2000" name="Anim. Genet.">
        <title>Interleukin-12 p35 encoding gene of cattle and sheep harbours a polymorphic T stretch in intron 4.</title>
        <authorList>
            <person name="Schmidt P."/>
            <person name="Kuehn C."/>
            <person name="Kang'a S."/>
            <person name="Hanotte O."/>
            <person name="Vanselow J."/>
            <person name="Anton I."/>
            <person name="Langner C."/>
            <person name="Schwerin M."/>
        </authorList>
    </citation>
    <scope>NUCLEOTIDE SEQUENCE [GENOMIC DNA] OF 72-132</scope>
</reference>
<organism>
    <name type="scientific">Ovis aries</name>
    <name type="common">Sheep</name>
    <dbReference type="NCBI Taxonomy" id="9940"/>
    <lineage>
        <taxon>Eukaryota</taxon>
        <taxon>Metazoa</taxon>
        <taxon>Chordata</taxon>
        <taxon>Craniata</taxon>
        <taxon>Vertebrata</taxon>
        <taxon>Euteleostomi</taxon>
        <taxon>Mammalia</taxon>
        <taxon>Eutheria</taxon>
        <taxon>Laurasiatheria</taxon>
        <taxon>Artiodactyla</taxon>
        <taxon>Ruminantia</taxon>
        <taxon>Pecora</taxon>
        <taxon>Bovidae</taxon>
        <taxon>Caprinae</taxon>
        <taxon>Ovis</taxon>
    </lineage>
</organism>
<protein>
    <recommendedName>
        <fullName>Interleukin-12 subunit alpha</fullName>
        <shortName>IL-12A</shortName>
    </recommendedName>
    <alternativeName>
        <fullName>Cytotoxic lymphocyte maturation factor 35 kDa subunit</fullName>
        <shortName>CLMF p35</shortName>
    </alternativeName>
    <alternativeName>
        <fullName>IL-12 subunit p35</fullName>
    </alternativeName>
</protein>